<protein>
    <recommendedName>
        <fullName evidence="1">UPF0301 protein Cpar_0662</fullName>
    </recommendedName>
</protein>
<accession>B3QMC9</accession>
<name>Y662_CHLP8</name>
<sequence length="187" mass="21012">MDNEFEMLKAGKLLIASANLLESNFKRTVLLMCEHNDEGSIGFILNKPMEFKVCEAISGFDEIDEPLHMGGPVQVDTVHFLHTRGDVIDDAQEVLPGLFWGGDKEQLSYLINTGVIRPSEVRFFLGYAGWSAGQLKDEFEEGSWYTADASNEQVFTDEYERMWSRTVRSKGGDYCLVANSPELPGMN</sequence>
<organism>
    <name type="scientific">Chlorobaculum parvum (strain DSM 263 / NCIMB 8327)</name>
    <name type="common">Chlorobium vibrioforme subsp. thiosulfatophilum</name>
    <dbReference type="NCBI Taxonomy" id="517417"/>
    <lineage>
        <taxon>Bacteria</taxon>
        <taxon>Pseudomonadati</taxon>
        <taxon>Chlorobiota</taxon>
        <taxon>Chlorobiia</taxon>
        <taxon>Chlorobiales</taxon>
        <taxon>Chlorobiaceae</taxon>
        <taxon>Chlorobaculum</taxon>
    </lineage>
</organism>
<evidence type="ECO:0000255" key="1">
    <source>
        <dbReference type="HAMAP-Rule" id="MF_00758"/>
    </source>
</evidence>
<feature type="chain" id="PRO_1000198263" description="UPF0301 protein Cpar_0662">
    <location>
        <begin position="1"/>
        <end position="187"/>
    </location>
</feature>
<reference key="1">
    <citation type="submission" date="2008-06" db="EMBL/GenBank/DDBJ databases">
        <title>Complete sequence of Chlorobaculum parvum NCIB 8327.</title>
        <authorList>
            <consortium name="US DOE Joint Genome Institute"/>
            <person name="Lucas S."/>
            <person name="Copeland A."/>
            <person name="Lapidus A."/>
            <person name="Glavina del Rio T."/>
            <person name="Dalin E."/>
            <person name="Tice H."/>
            <person name="Bruce D."/>
            <person name="Goodwin L."/>
            <person name="Pitluck S."/>
            <person name="Schmutz J."/>
            <person name="Larimer F."/>
            <person name="Land M."/>
            <person name="Hauser L."/>
            <person name="Kyrpides N."/>
            <person name="Mikhailova N."/>
            <person name="Zhao F."/>
            <person name="Li T."/>
            <person name="Liu Z."/>
            <person name="Overmann J."/>
            <person name="Bryant D.A."/>
            <person name="Richardson P."/>
        </authorList>
    </citation>
    <scope>NUCLEOTIDE SEQUENCE [LARGE SCALE GENOMIC DNA]</scope>
    <source>
        <strain>DSM 263 / NCIMB 8327</strain>
    </source>
</reference>
<gene>
    <name type="ordered locus">Cpar_0662</name>
</gene>
<comment type="similarity">
    <text evidence="1">Belongs to the UPF0301 (AlgH) family.</text>
</comment>
<proteinExistence type="inferred from homology"/>
<dbReference type="EMBL" id="CP001099">
    <property type="protein sequence ID" value="ACF11082.1"/>
    <property type="molecule type" value="Genomic_DNA"/>
</dbReference>
<dbReference type="RefSeq" id="WP_012501915.1">
    <property type="nucleotide sequence ID" value="NC_011027.1"/>
</dbReference>
<dbReference type="SMR" id="B3QMC9"/>
<dbReference type="STRING" id="517417.Cpar_0662"/>
<dbReference type="KEGG" id="cpc:Cpar_0662"/>
<dbReference type="eggNOG" id="COG1678">
    <property type="taxonomic scope" value="Bacteria"/>
</dbReference>
<dbReference type="HOGENOM" id="CLU_057596_2_1_10"/>
<dbReference type="OrthoDB" id="9807486at2"/>
<dbReference type="Proteomes" id="UP000008811">
    <property type="component" value="Chromosome"/>
</dbReference>
<dbReference type="GO" id="GO:0005829">
    <property type="term" value="C:cytosol"/>
    <property type="evidence" value="ECO:0007669"/>
    <property type="project" value="TreeGrafter"/>
</dbReference>
<dbReference type="Gene3D" id="3.40.1740.10">
    <property type="entry name" value="VC0467-like"/>
    <property type="match status" value="1"/>
</dbReference>
<dbReference type="HAMAP" id="MF_00758">
    <property type="entry name" value="UPF0301"/>
    <property type="match status" value="1"/>
</dbReference>
<dbReference type="InterPro" id="IPR003774">
    <property type="entry name" value="AlgH-like"/>
</dbReference>
<dbReference type="PANTHER" id="PTHR30327">
    <property type="entry name" value="UNCHARACTERIZED PROTEIN YQGE"/>
    <property type="match status" value="1"/>
</dbReference>
<dbReference type="PANTHER" id="PTHR30327:SF1">
    <property type="entry name" value="UPF0301 PROTEIN YQGE"/>
    <property type="match status" value="1"/>
</dbReference>
<dbReference type="Pfam" id="PF02622">
    <property type="entry name" value="DUF179"/>
    <property type="match status" value="1"/>
</dbReference>
<dbReference type="SUPFAM" id="SSF143456">
    <property type="entry name" value="VC0467-like"/>
    <property type="match status" value="1"/>
</dbReference>